<protein>
    <recommendedName>
        <fullName>Proteasome subunit beta type-7</fullName>
        <ecNumber>3.4.25.1</ecNumber>
    </recommendedName>
    <alternativeName>
        <fullName>Macropain chain Z</fullName>
    </alternativeName>
    <alternativeName>
        <fullName>Multicatalytic endopeptidase complex chain Z</fullName>
    </alternativeName>
    <alternativeName>
        <fullName>Proteasome subunit Z</fullName>
    </alternativeName>
    <alternativeName>
        <fullName>Proteasome subunit beta-2</fullName>
        <shortName>beta-2</shortName>
    </alternativeName>
</protein>
<gene>
    <name type="primary">Psmb7</name>
    <name type="synonym">Mmc14</name>
</gene>
<proteinExistence type="evidence at protein level"/>
<accession>P70195</accession>
<accession>O09084</accession>
<accession>Q542F7</accession>
<accession>Q9CZH4</accession>
<accession>Q9DCF7</accession>
<keyword id="KW-0002">3D-structure</keyword>
<keyword id="KW-0963">Cytoplasm</keyword>
<keyword id="KW-0903">Direct protein sequencing</keyword>
<keyword id="KW-0378">Hydrolase</keyword>
<keyword id="KW-0539">Nucleus</keyword>
<keyword id="KW-0645">Protease</keyword>
<keyword id="KW-0647">Proteasome</keyword>
<keyword id="KW-1185">Reference proteome</keyword>
<keyword id="KW-0888">Threonine protease</keyword>
<keyword id="KW-0865">Zymogen</keyword>
<dbReference type="EC" id="3.4.25.1"/>
<dbReference type="EMBL" id="D83585">
    <property type="protein sequence ID" value="BAA12017.1"/>
    <property type="molecule type" value="mRNA"/>
</dbReference>
<dbReference type="EMBL" id="Y10874">
    <property type="protein sequence ID" value="CAA71824.1"/>
    <property type="molecule type" value="mRNA"/>
</dbReference>
<dbReference type="EMBL" id="D85570">
    <property type="protein sequence ID" value="BAA22857.1"/>
    <property type="molecule type" value="Genomic_DNA"/>
</dbReference>
<dbReference type="EMBL" id="AK002823">
    <property type="protein sequence ID" value="BAB22385.1"/>
    <property type="molecule type" value="mRNA"/>
</dbReference>
<dbReference type="EMBL" id="AK012613">
    <property type="protein sequence ID" value="BAB28354.1"/>
    <property type="molecule type" value="mRNA"/>
</dbReference>
<dbReference type="EMBL" id="AK013961">
    <property type="protein sequence ID" value="BAB29085.1"/>
    <property type="molecule type" value="mRNA"/>
</dbReference>
<dbReference type="EMBL" id="AK075759">
    <property type="protein sequence ID" value="BAC35937.1"/>
    <property type="molecule type" value="mRNA"/>
</dbReference>
<dbReference type="EMBL" id="AK088276">
    <property type="protein sequence ID" value="BAC40251.1"/>
    <property type="molecule type" value="mRNA"/>
</dbReference>
<dbReference type="EMBL" id="AK088765">
    <property type="protein sequence ID" value="BAC40556.1"/>
    <property type="molecule type" value="mRNA"/>
</dbReference>
<dbReference type="EMBL" id="AK168823">
    <property type="protein sequence ID" value="BAE40650.1"/>
    <property type="molecule type" value="mRNA"/>
</dbReference>
<dbReference type="EMBL" id="BC057662">
    <property type="protein sequence ID" value="AAH57662.1"/>
    <property type="molecule type" value="mRNA"/>
</dbReference>
<dbReference type="CCDS" id="CCDS16010.1"/>
<dbReference type="PIR" id="JC6122">
    <property type="entry name" value="JC6122"/>
</dbReference>
<dbReference type="RefSeq" id="NP_035317.1">
    <property type="nucleotide sequence ID" value="NM_011187.1"/>
</dbReference>
<dbReference type="PDB" id="3UNB">
    <property type="method" value="X-ray"/>
    <property type="resolution" value="2.90 A"/>
    <property type="chains" value="H/V/j/x=44-277"/>
</dbReference>
<dbReference type="PDB" id="3UNE">
    <property type="method" value="X-ray"/>
    <property type="resolution" value="3.20 A"/>
    <property type="chains" value="H/V/j/x=44-277"/>
</dbReference>
<dbReference type="PDB" id="8YPK">
    <property type="method" value="EM"/>
    <property type="resolution" value="2.70 A"/>
    <property type="chains" value="B/E=44-277"/>
</dbReference>
<dbReference type="PDB" id="8YVP">
    <property type="method" value="EM"/>
    <property type="resolution" value="2.50 A"/>
    <property type="chains" value="B/E=44-277"/>
</dbReference>
<dbReference type="PDBsum" id="3UNB"/>
<dbReference type="PDBsum" id="3UNE"/>
<dbReference type="PDBsum" id="8YPK"/>
<dbReference type="PDBsum" id="8YVP"/>
<dbReference type="EMDB" id="EMD-39482"/>
<dbReference type="EMDB" id="EMD-39612"/>
<dbReference type="SMR" id="P70195"/>
<dbReference type="BioGRID" id="202424">
    <property type="interactions" value="43"/>
</dbReference>
<dbReference type="CORUM" id="P70195"/>
<dbReference type="FunCoup" id="P70195">
    <property type="interactions" value="3188"/>
</dbReference>
<dbReference type="IntAct" id="P70195">
    <property type="interactions" value="4"/>
</dbReference>
<dbReference type="STRING" id="10090.ENSMUSP00000028083"/>
<dbReference type="MEROPS" id="T01.011"/>
<dbReference type="iPTMnet" id="P70195"/>
<dbReference type="PhosphoSitePlus" id="P70195"/>
<dbReference type="SwissPalm" id="P70195"/>
<dbReference type="REPRODUCTION-2DPAGE" id="IPI00136483"/>
<dbReference type="REPRODUCTION-2DPAGE" id="P70195"/>
<dbReference type="CPTAC" id="non-CPTAC-3735"/>
<dbReference type="jPOST" id="P70195"/>
<dbReference type="PaxDb" id="10090-ENSMUSP00000028083"/>
<dbReference type="PeptideAtlas" id="P70195"/>
<dbReference type="ProteomicsDB" id="291763"/>
<dbReference type="Pumba" id="P70195"/>
<dbReference type="Antibodypedia" id="30460">
    <property type="antibodies" value="328 antibodies from 32 providers"/>
</dbReference>
<dbReference type="DNASU" id="19177"/>
<dbReference type="Ensembl" id="ENSMUST00000028083.6">
    <property type="protein sequence ID" value="ENSMUSP00000028083.6"/>
    <property type="gene ID" value="ENSMUSG00000026750.7"/>
</dbReference>
<dbReference type="GeneID" id="19177"/>
<dbReference type="KEGG" id="mmu:19177"/>
<dbReference type="UCSC" id="uc008jnp.1">
    <property type="organism name" value="mouse"/>
</dbReference>
<dbReference type="AGR" id="MGI:107637"/>
<dbReference type="CTD" id="5695"/>
<dbReference type="MGI" id="MGI:107637">
    <property type="gene designation" value="Psmb7"/>
</dbReference>
<dbReference type="VEuPathDB" id="HostDB:ENSMUSG00000026750"/>
<dbReference type="eggNOG" id="KOG0173">
    <property type="taxonomic scope" value="Eukaryota"/>
</dbReference>
<dbReference type="GeneTree" id="ENSGT00940000157419"/>
<dbReference type="HOGENOM" id="CLU_035750_3_0_1"/>
<dbReference type="InParanoid" id="P70195"/>
<dbReference type="OMA" id="KQHLFRH"/>
<dbReference type="OrthoDB" id="429533at2759"/>
<dbReference type="PhylomeDB" id="P70195"/>
<dbReference type="TreeFam" id="TF106222"/>
<dbReference type="Reactome" id="R-MMU-1169091">
    <property type="pathway name" value="Activation of NF-kappaB in B cells"/>
</dbReference>
<dbReference type="Reactome" id="R-MMU-1234176">
    <property type="pathway name" value="Oxygen-dependent proline hydroxylation of Hypoxia-inducible Factor Alpha"/>
</dbReference>
<dbReference type="Reactome" id="R-MMU-1236978">
    <property type="pathway name" value="Cross-presentation of soluble exogenous antigens (endosomes)"/>
</dbReference>
<dbReference type="Reactome" id="R-MMU-174084">
    <property type="pathway name" value="Autodegradation of Cdh1 by Cdh1:APC/C"/>
</dbReference>
<dbReference type="Reactome" id="R-MMU-174154">
    <property type="pathway name" value="APC/C:Cdc20 mediated degradation of Securin"/>
</dbReference>
<dbReference type="Reactome" id="R-MMU-174178">
    <property type="pathway name" value="APC/C:Cdh1 mediated degradation of Cdc20 and other APC/C:Cdh1 targeted proteins in late mitosis/early G1"/>
</dbReference>
<dbReference type="Reactome" id="R-MMU-174184">
    <property type="pathway name" value="Cdc20:Phospho-APC/C mediated degradation of Cyclin A"/>
</dbReference>
<dbReference type="Reactome" id="R-MMU-187577">
    <property type="pathway name" value="SCF(Skp2)-mediated degradation of p27/p21"/>
</dbReference>
<dbReference type="Reactome" id="R-MMU-195253">
    <property type="pathway name" value="Degradation of beta-catenin by the destruction complex"/>
</dbReference>
<dbReference type="Reactome" id="R-MMU-202424">
    <property type="pathway name" value="Downstream TCR signaling"/>
</dbReference>
<dbReference type="Reactome" id="R-MMU-2467813">
    <property type="pathway name" value="Separation of Sister Chromatids"/>
</dbReference>
<dbReference type="Reactome" id="R-MMU-2871837">
    <property type="pathway name" value="FCERI mediated NF-kB activation"/>
</dbReference>
<dbReference type="Reactome" id="R-MMU-349425">
    <property type="pathway name" value="Autodegradation of the E3 ubiquitin ligase COP1"/>
</dbReference>
<dbReference type="Reactome" id="R-MMU-350562">
    <property type="pathway name" value="Regulation of ornithine decarboxylase (ODC)"/>
</dbReference>
<dbReference type="Reactome" id="R-MMU-382556">
    <property type="pathway name" value="ABC-family proteins mediated transport"/>
</dbReference>
<dbReference type="Reactome" id="R-MMU-450408">
    <property type="pathway name" value="AUF1 (hnRNP D0) binds and destabilizes mRNA"/>
</dbReference>
<dbReference type="Reactome" id="R-MMU-4608870">
    <property type="pathway name" value="Asymmetric localization of PCP proteins"/>
</dbReference>
<dbReference type="Reactome" id="R-MMU-4641257">
    <property type="pathway name" value="Degradation of AXIN"/>
</dbReference>
<dbReference type="Reactome" id="R-MMU-4641258">
    <property type="pathway name" value="Degradation of DVL"/>
</dbReference>
<dbReference type="Reactome" id="R-MMU-5358346">
    <property type="pathway name" value="Hedgehog ligand biogenesis"/>
</dbReference>
<dbReference type="Reactome" id="R-MMU-5607761">
    <property type="pathway name" value="Dectin-1 mediated noncanonical NF-kB signaling"/>
</dbReference>
<dbReference type="Reactome" id="R-MMU-5607764">
    <property type="pathway name" value="CLEC7A (Dectin-1) signaling"/>
</dbReference>
<dbReference type="Reactome" id="R-MMU-5610780">
    <property type="pathway name" value="Degradation of GLI1 by the proteasome"/>
</dbReference>
<dbReference type="Reactome" id="R-MMU-5610785">
    <property type="pathway name" value="GLI3 is processed to GLI3R by the proteasome"/>
</dbReference>
<dbReference type="Reactome" id="R-MMU-5632684">
    <property type="pathway name" value="Hedgehog 'on' state"/>
</dbReference>
<dbReference type="Reactome" id="R-MMU-5658442">
    <property type="pathway name" value="Regulation of RAS by GAPs"/>
</dbReference>
<dbReference type="Reactome" id="R-MMU-5668541">
    <property type="pathway name" value="TNFR2 non-canonical NF-kB pathway"/>
</dbReference>
<dbReference type="Reactome" id="R-MMU-5676590">
    <property type="pathway name" value="NIK--&gt;noncanonical NF-kB signaling"/>
</dbReference>
<dbReference type="Reactome" id="R-MMU-5687128">
    <property type="pathway name" value="MAPK6/MAPK4 signaling"/>
</dbReference>
<dbReference type="Reactome" id="R-MMU-5689603">
    <property type="pathway name" value="UCH proteinases"/>
</dbReference>
<dbReference type="Reactome" id="R-MMU-5689880">
    <property type="pathway name" value="Ub-specific processing proteases"/>
</dbReference>
<dbReference type="Reactome" id="R-MMU-6798695">
    <property type="pathway name" value="Neutrophil degranulation"/>
</dbReference>
<dbReference type="Reactome" id="R-MMU-68867">
    <property type="pathway name" value="Assembly of the pre-replicative complex"/>
</dbReference>
<dbReference type="Reactome" id="R-MMU-68949">
    <property type="pathway name" value="Orc1 removal from chromatin"/>
</dbReference>
<dbReference type="Reactome" id="R-MMU-69017">
    <property type="pathway name" value="CDK-mediated phosphorylation and removal of Cdc6"/>
</dbReference>
<dbReference type="Reactome" id="R-MMU-69481">
    <property type="pathway name" value="G2/M Checkpoints"/>
</dbReference>
<dbReference type="Reactome" id="R-MMU-69601">
    <property type="pathway name" value="Ubiquitin Mediated Degradation of Phosphorylated Cdc25A"/>
</dbReference>
<dbReference type="Reactome" id="R-MMU-75815">
    <property type="pathway name" value="Ubiquitin-dependent degradation of Cyclin D"/>
</dbReference>
<dbReference type="Reactome" id="R-MMU-8852276">
    <property type="pathway name" value="The role of GTSE1 in G2/M progression after G2 checkpoint"/>
</dbReference>
<dbReference type="Reactome" id="R-MMU-8854050">
    <property type="pathway name" value="FBXL7 down-regulates AURKA during mitotic entry and in early mitosis"/>
</dbReference>
<dbReference type="Reactome" id="R-MMU-8939236">
    <property type="pathway name" value="RUNX1 regulates transcription of genes involved in differentiation of HSCs"/>
</dbReference>
<dbReference type="Reactome" id="R-MMU-8939902">
    <property type="pathway name" value="Regulation of RUNX2 expression and activity"/>
</dbReference>
<dbReference type="Reactome" id="R-MMU-8941858">
    <property type="pathway name" value="Regulation of RUNX3 expression and activity"/>
</dbReference>
<dbReference type="Reactome" id="R-MMU-8948751">
    <property type="pathway name" value="Regulation of PTEN stability and activity"/>
</dbReference>
<dbReference type="Reactome" id="R-MMU-8951664">
    <property type="pathway name" value="Neddylation"/>
</dbReference>
<dbReference type="Reactome" id="R-MMU-9020702">
    <property type="pathway name" value="Interleukin-1 signaling"/>
</dbReference>
<dbReference type="Reactome" id="R-MMU-9755511">
    <property type="pathway name" value="KEAP1-NFE2L2 pathway"/>
</dbReference>
<dbReference type="Reactome" id="R-MMU-9762114">
    <property type="pathway name" value="GSK3B and BTRC:CUL1-mediated-degradation of NFE2L2"/>
</dbReference>
<dbReference type="Reactome" id="R-MMU-983168">
    <property type="pathway name" value="Antigen processing: Ubiquitination &amp; Proteasome degradation"/>
</dbReference>
<dbReference type="Reactome" id="R-MMU-9907900">
    <property type="pathway name" value="Proteasome assembly"/>
</dbReference>
<dbReference type="BioGRID-ORCS" id="19177">
    <property type="hits" value="31 hits in 72 CRISPR screens"/>
</dbReference>
<dbReference type="ChiTaRS" id="Psmb7">
    <property type="organism name" value="mouse"/>
</dbReference>
<dbReference type="EvolutionaryTrace" id="P70195"/>
<dbReference type="PRO" id="PR:P70195"/>
<dbReference type="Proteomes" id="UP000000589">
    <property type="component" value="Chromosome 2"/>
</dbReference>
<dbReference type="RNAct" id="P70195">
    <property type="molecule type" value="protein"/>
</dbReference>
<dbReference type="Bgee" id="ENSMUSG00000026750">
    <property type="expression patterns" value="Expressed in medial ganglionic eminence and 260 other cell types or tissues"/>
</dbReference>
<dbReference type="GO" id="GO:0005929">
    <property type="term" value="C:cilium"/>
    <property type="evidence" value="ECO:0007669"/>
    <property type="project" value="Ensembl"/>
</dbReference>
<dbReference type="GO" id="GO:0005829">
    <property type="term" value="C:cytosol"/>
    <property type="evidence" value="ECO:0000304"/>
    <property type="project" value="Reactome"/>
</dbReference>
<dbReference type="GO" id="GO:0016604">
    <property type="term" value="C:nuclear body"/>
    <property type="evidence" value="ECO:0007669"/>
    <property type="project" value="Ensembl"/>
</dbReference>
<dbReference type="GO" id="GO:0005654">
    <property type="term" value="C:nucleoplasm"/>
    <property type="evidence" value="ECO:0000304"/>
    <property type="project" value="Reactome"/>
</dbReference>
<dbReference type="GO" id="GO:0005839">
    <property type="term" value="C:proteasome core complex"/>
    <property type="evidence" value="ECO:0000314"/>
    <property type="project" value="UniProtKB"/>
</dbReference>
<dbReference type="GO" id="GO:0019774">
    <property type="term" value="C:proteasome core complex, beta-subunit complex"/>
    <property type="evidence" value="ECO:0000250"/>
    <property type="project" value="UniProtKB"/>
</dbReference>
<dbReference type="GO" id="GO:0004298">
    <property type="term" value="F:threonine-type endopeptidase activity"/>
    <property type="evidence" value="ECO:0007669"/>
    <property type="project" value="UniProtKB-KW"/>
</dbReference>
<dbReference type="GO" id="GO:0051603">
    <property type="term" value="P:proteolysis involved in protein catabolic process"/>
    <property type="evidence" value="ECO:0007669"/>
    <property type="project" value="InterPro"/>
</dbReference>
<dbReference type="CDD" id="cd03763">
    <property type="entry name" value="proteasome_beta_type_7"/>
    <property type="match status" value="1"/>
</dbReference>
<dbReference type="FunFam" id="3.60.20.10:FF:000005">
    <property type="entry name" value="Proteasome subunit beta type-2"/>
    <property type="match status" value="1"/>
</dbReference>
<dbReference type="Gene3D" id="3.60.20.10">
    <property type="entry name" value="Glutamine Phosphoribosylpyrophosphate, subunit 1, domain 1"/>
    <property type="match status" value="1"/>
</dbReference>
<dbReference type="InterPro" id="IPR029055">
    <property type="entry name" value="Ntn_hydrolases_N"/>
</dbReference>
<dbReference type="InterPro" id="IPR000243">
    <property type="entry name" value="Pept_T1A_subB"/>
</dbReference>
<dbReference type="InterPro" id="IPR024689">
    <property type="entry name" value="Proteasome_bsu_C"/>
</dbReference>
<dbReference type="InterPro" id="IPR016050">
    <property type="entry name" value="Proteasome_bsu_CS"/>
</dbReference>
<dbReference type="InterPro" id="IPR001353">
    <property type="entry name" value="Proteasome_sua/b"/>
</dbReference>
<dbReference type="InterPro" id="IPR023333">
    <property type="entry name" value="Proteasome_suB-type"/>
</dbReference>
<dbReference type="PANTHER" id="PTHR32194">
    <property type="entry name" value="METALLOPROTEASE TLDD"/>
    <property type="match status" value="1"/>
</dbReference>
<dbReference type="PANTHER" id="PTHR32194:SF4">
    <property type="entry name" value="PROTEASOME SUBUNIT BETA TYPE-7"/>
    <property type="match status" value="1"/>
</dbReference>
<dbReference type="Pfam" id="PF12465">
    <property type="entry name" value="Pr_beta_C"/>
    <property type="match status" value="1"/>
</dbReference>
<dbReference type="Pfam" id="PF00227">
    <property type="entry name" value="Proteasome"/>
    <property type="match status" value="1"/>
</dbReference>
<dbReference type="PRINTS" id="PR00141">
    <property type="entry name" value="PROTEASOME"/>
</dbReference>
<dbReference type="SUPFAM" id="SSF56235">
    <property type="entry name" value="N-terminal nucleophile aminohydrolases (Ntn hydrolases)"/>
    <property type="match status" value="1"/>
</dbReference>
<dbReference type="PROSITE" id="PS00854">
    <property type="entry name" value="PROTEASOME_BETA_1"/>
    <property type="match status" value="1"/>
</dbReference>
<dbReference type="PROSITE" id="PS51476">
    <property type="entry name" value="PROTEASOME_BETA_2"/>
    <property type="match status" value="1"/>
</dbReference>
<sequence length="277" mass="29891">MAAVSVFQPPVGGFSFDNCRRNAVLEADFAKKGFKLPKARKTGTTIAGVVYKDGIVLGADTRATEGMVVADKNCSKIHFISPNIYCCGAGTAADTDMTTQLISSNLELHSLTTGRLPRVVTANRMLKQMLFRYQGYIGAALVLGGVDVTGPHLYSIYPHGSTDKLPYVTMGSGSLAAMAVFEDKFRPDMEEEEAKKLVSEAIAAGIFNDLGSGSNIDLCVISKSKLDFLRPFSVPNKKGTRLGRYRCEKGTTAVLTEKVTPLEIEVLEETVQTMDTS</sequence>
<comment type="function">
    <text evidence="4 7">Component of the 20S core proteasome complex involved in the proteolytic degradation of most intracellular proteins. This complex plays numerous essential roles within the cell by associating with different regulatory particles. Associated with two 19S regulatory particles, forms the 26S proteasome and thus participates in the ATP-dependent degradation of ubiquitinated proteins. The 26S proteasome plays a key role in the maintenance of protein homeostasis by removing misfolded or damaged proteins that could impair cellular functions, and by removing proteins whose functions are no longer required. Associated with the PA200 or PA28, the 20S proteasome mediates ubiquitin-independent protein degradation. This type of proteolysis is required in several pathways including spermatogenesis (20S-PA200 complex) or generation of a subset of MHC class I-presented antigenic peptides (20S-PA28 complex). Within the 20S core complex, PSMB7 displays a trypsin-like activity.</text>
</comment>
<comment type="catalytic activity">
    <reaction evidence="2">
        <text>Cleavage of peptide bonds with very broad specificity.</text>
        <dbReference type="EC" id="3.4.25.1"/>
    </reaction>
</comment>
<comment type="subunit">
    <text evidence="5 7">The 26S proteasome consists of a 20S proteasome core and two 19S regulatory subunits. The 20S proteasome core is a barrel-shaped complex made of 28 subunits that are arranged in four stacked rings. The two outer rings are each formed by seven alpha subunits, and the two inner rings are formed by seven beta subunits. The proteolytic activity is exerted by three beta-subunits PSMB5, PSMB6 and PSMB7.</text>
</comment>
<comment type="subcellular location">
    <subcellularLocation>
        <location evidence="2">Cytoplasm</location>
    </subcellularLocation>
    <subcellularLocation>
        <location evidence="2">Nucleus</location>
    </subcellularLocation>
    <text evidence="2">Translocated from the cytoplasm into the nucleus following interaction with AKIRIN2, which bridges the proteasome with the nuclear import receptor IPO9.</text>
</comment>
<comment type="induction">
    <text evidence="6">Up-regulated by the antioxidant dithiolethione (D3T) in colon (at protein level).</text>
</comment>
<comment type="similarity">
    <text evidence="3">Belongs to the peptidase T1B family.</text>
</comment>
<feature type="propeptide" id="PRO_0000026647" description="Removed in mature form" evidence="1">
    <location>
        <begin position="1"/>
        <end position="43"/>
    </location>
</feature>
<feature type="chain" id="PRO_0000026648" description="Proteasome subunit beta type-7">
    <location>
        <begin position="44"/>
        <end position="277"/>
    </location>
</feature>
<feature type="active site" description="Nucleophile" evidence="1">
    <location>
        <position position="44"/>
    </location>
</feature>
<feature type="sequence conflict" description="In Ref. 4; BAB28354." evidence="8" ref="4">
    <original>L</original>
    <variation>F</variation>
    <location>
        <position position="108"/>
    </location>
</feature>
<feature type="sequence conflict" description="In Ref. 4; BAB22385." evidence="8" ref="4">
    <original>K</original>
    <variation>E</variation>
    <location>
        <position position="237"/>
    </location>
</feature>
<feature type="strand" evidence="9">
    <location>
        <begin position="46"/>
        <end position="50"/>
    </location>
</feature>
<feature type="strand" evidence="9">
    <location>
        <begin position="52"/>
        <end position="60"/>
    </location>
</feature>
<feature type="strand" evidence="9">
    <location>
        <begin position="63"/>
        <end position="65"/>
    </location>
</feature>
<feature type="strand" evidence="9">
    <location>
        <begin position="68"/>
        <end position="73"/>
    </location>
</feature>
<feature type="strand" evidence="9">
    <location>
        <begin position="77"/>
        <end position="91"/>
    </location>
</feature>
<feature type="helix" evidence="9">
    <location>
        <begin position="92"/>
        <end position="113"/>
    </location>
</feature>
<feature type="helix" evidence="9">
    <location>
        <begin position="119"/>
        <end position="132"/>
    </location>
</feature>
<feature type="turn" evidence="9">
    <location>
        <begin position="133"/>
        <end position="135"/>
    </location>
</feature>
<feature type="strand" evidence="9">
    <location>
        <begin position="139"/>
        <end position="146"/>
    </location>
</feature>
<feature type="strand" evidence="9">
    <location>
        <begin position="151"/>
        <end position="156"/>
    </location>
</feature>
<feature type="strand" evidence="9">
    <location>
        <begin position="162"/>
        <end position="164"/>
    </location>
</feature>
<feature type="strand" evidence="9">
    <location>
        <begin position="166"/>
        <end position="171"/>
    </location>
</feature>
<feature type="helix" evidence="9">
    <location>
        <begin position="174"/>
        <end position="184"/>
    </location>
</feature>
<feature type="helix" evidence="9">
    <location>
        <begin position="191"/>
        <end position="208"/>
    </location>
</feature>
<feature type="strand" evidence="9">
    <location>
        <begin position="216"/>
        <end position="224"/>
    </location>
</feature>
<feature type="strand" evidence="9">
    <location>
        <begin position="226"/>
        <end position="233"/>
    </location>
</feature>
<feature type="strand" evidence="9">
    <location>
        <begin position="254"/>
        <end position="261"/>
    </location>
</feature>
<evidence type="ECO:0000250" key="1"/>
<evidence type="ECO:0000250" key="2">
    <source>
        <dbReference type="UniProtKB" id="Q99436"/>
    </source>
</evidence>
<evidence type="ECO:0000255" key="3">
    <source>
        <dbReference type="PROSITE-ProRule" id="PRU00809"/>
    </source>
</evidence>
<evidence type="ECO:0000269" key="4">
    <source>
    </source>
</evidence>
<evidence type="ECO:0000269" key="5">
    <source>
    </source>
</evidence>
<evidence type="ECO:0000269" key="6">
    <source>
    </source>
</evidence>
<evidence type="ECO:0000269" key="7">
    <source>
    </source>
</evidence>
<evidence type="ECO:0000305" key="8"/>
<evidence type="ECO:0007829" key="9">
    <source>
        <dbReference type="PDB" id="3UNB"/>
    </source>
</evidence>
<reference key="1">
    <citation type="journal article" date="1996" name="Proc. Natl. Acad. Sci. U.S.A.">
        <title>Chromosomal localization of the proteasome Z subunit gene reveals an ancient chromosomal duplication involving the major histocompatibility complex.</title>
        <authorList>
            <person name="Kasahara M."/>
            <person name="Hayashi M."/>
            <person name="Tanaka K."/>
            <person name="Inoko H."/>
            <person name="Sugaya K."/>
            <person name="Ikemura T."/>
            <person name="Ishibashi T."/>
        </authorList>
    </citation>
    <scope>NUCLEOTIDE SEQUENCE [MRNA]</scope>
    <source>
        <strain>C57BL/6J</strain>
        <tissue>Epididymis</tissue>
    </source>
</reference>
<reference key="2">
    <citation type="submission" date="1997-04" db="EMBL/GenBank/DDBJ databases">
        <title>Molecular cloning of the mouse proteasome subunits MC14 and MECL-1: reciprocally regulated tissue expression of interferon-gamma-modulated proteasome subunits.</title>
        <authorList>
            <person name="Stohwasser R."/>
            <person name="Standera S."/>
            <person name="Peters I."/>
            <person name="Kloetzel P.-M."/>
            <person name="Groettrup M."/>
        </authorList>
    </citation>
    <scope>NUCLEOTIDE SEQUENCE</scope>
    <source>
        <strain>C57BL/6J</strain>
        <tissue>Spleen</tissue>
    </source>
</reference>
<reference key="3">
    <citation type="journal article" date="1997" name="J. Immunol.">
        <title>The mouse genes encoding the third pair of beta-type proteasome subunits regulated reciprocally by IFN-gamma: structural comparison, chromosomal localization, and analysis of the promoter.</title>
        <authorList>
            <person name="Hayashi M."/>
            <person name="Ishibashi T."/>
            <person name="Tanaka K."/>
            <person name="Kasahara M."/>
        </authorList>
    </citation>
    <scope>NUCLEOTIDE SEQUENCE [GENOMIC DNA]</scope>
    <source>
        <strain>BALB/cJ</strain>
    </source>
</reference>
<reference key="4">
    <citation type="journal article" date="2005" name="Science">
        <title>The transcriptional landscape of the mammalian genome.</title>
        <authorList>
            <person name="Carninci P."/>
            <person name="Kasukawa T."/>
            <person name="Katayama S."/>
            <person name="Gough J."/>
            <person name="Frith M.C."/>
            <person name="Maeda N."/>
            <person name="Oyama R."/>
            <person name="Ravasi T."/>
            <person name="Lenhard B."/>
            <person name="Wells C."/>
            <person name="Kodzius R."/>
            <person name="Shimokawa K."/>
            <person name="Bajic V.B."/>
            <person name="Brenner S.E."/>
            <person name="Batalov S."/>
            <person name="Forrest A.R."/>
            <person name="Zavolan M."/>
            <person name="Davis M.J."/>
            <person name="Wilming L.G."/>
            <person name="Aidinis V."/>
            <person name="Allen J.E."/>
            <person name="Ambesi-Impiombato A."/>
            <person name="Apweiler R."/>
            <person name="Aturaliya R.N."/>
            <person name="Bailey T.L."/>
            <person name="Bansal M."/>
            <person name="Baxter L."/>
            <person name="Beisel K.W."/>
            <person name="Bersano T."/>
            <person name="Bono H."/>
            <person name="Chalk A.M."/>
            <person name="Chiu K.P."/>
            <person name="Choudhary V."/>
            <person name="Christoffels A."/>
            <person name="Clutterbuck D.R."/>
            <person name="Crowe M.L."/>
            <person name="Dalla E."/>
            <person name="Dalrymple B.P."/>
            <person name="de Bono B."/>
            <person name="Della Gatta G."/>
            <person name="di Bernardo D."/>
            <person name="Down T."/>
            <person name="Engstrom P."/>
            <person name="Fagiolini M."/>
            <person name="Faulkner G."/>
            <person name="Fletcher C.F."/>
            <person name="Fukushima T."/>
            <person name="Furuno M."/>
            <person name="Futaki S."/>
            <person name="Gariboldi M."/>
            <person name="Georgii-Hemming P."/>
            <person name="Gingeras T.R."/>
            <person name="Gojobori T."/>
            <person name="Green R.E."/>
            <person name="Gustincich S."/>
            <person name="Harbers M."/>
            <person name="Hayashi Y."/>
            <person name="Hensch T.K."/>
            <person name="Hirokawa N."/>
            <person name="Hill D."/>
            <person name="Huminiecki L."/>
            <person name="Iacono M."/>
            <person name="Ikeo K."/>
            <person name="Iwama A."/>
            <person name="Ishikawa T."/>
            <person name="Jakt M."/>
            <person name="Kanapin A."/>
            <person name="Katoh M."/>
            <person name="Kawasawa Y."/>
            <person name="Kelso J."/>
            <person name="Kitamura H."/>
            <person name="Kitano H."/>
            <person name="Kollias G."/>
            <person name="Krishnan S.P."/>
            <person name="Kruger A."/>
            <person name="Kummerfeld S.K."/>
            <person name="Kurochkin I.V."/>
            <person name="Lareau L.F."/>
            <person name="Lazarevic D."/>
            <person name="Lipovich L."/>
            <person name="Liu J."/>
            <person name="Liuni S."/>
            <person name="McWilliam S."/>
            <person name="Madan Babu M."/>
            <person name="Madera M."/>
            <person name="Marchionni L."/>
            <person name="Matsuda H."/>
            <person name="Matsuzawa S."/>
            <person name="Miki H."/>
            <person name="Mignone F."/>
            <person name="Miyake S."/>
            <person name="Morris K."/>
            <person name="Mottagui-Tabar S."/>
            <person name="Mulder N."/>
            <person name="Nakano N."/>
            <person name="Nakauchi H."/>
            <person name="Ng P."/>
            <person name="Nilsson R."/>
            <person name="Nishiguchi S."/>
            <person name="Nishikawa S."/>
            <person name="Nori F."/>
            <person name="Ohara O."/>
            <person name="Okazaki Y."/>
            <person name="Orlando V."/>
            <person name="Pang K.C."/>
            <person name="Pavan W.J."/>
            <person name="Pavesi G."/>
            <person name="Pesole G."/>
            <person name="Petrovsky N."/>
            <person name="Piazza S."/>
            <person name="Reed J."/>
            <person name="Reid J.F."/>
            <person name="Ring B.Z."/>
            <person name="Ringwald M."/>
            <person name="Rost B."/>
            <person name="Ruan Y."/>
            <person name="Salzberg S.L."/>
            <person name="Sandelin A."/>
            <person name="Schneider C."/>
            <person name="Schoenbach C."/>
            <person name="Sekiguchi K."/>
            <person name="Semple C.A."/>
            <person name="Seno S."/>
            <person name="Sessa L."/>
            <person name="Sheng Y."/>
            <person name="Shibata Y."/>
            <person name="Shimada H."/>
            <person name="Shimada K."/>
            <person name="Silva D."/>
            <person name="Sinclair B."/>
            <person name="Sperling S."/>
            <person name="Stupka E."/>
            <person name="Sugiura K."/>
            <person name="Sultana R."/>
            <person name="Takenaka Y."/>
            <person name="Taki K."/>
            <person name="Tammoja K."/>
            <person name="Tan S.L."/>
            <person name="Tang S."/>
            <person name="Taylor M.S."/>
            <person name="Tegner J."/>
            <person name="Teichmann S.A."/>
            <person name="Ueda H.R."/>
            <person name="van Nimwegen E."/>
            <person name="Verardo R."/>
            <person name="Wei C.L."/>
            <person name="Yagi K."/>
            <person name="Yamanishi H."/>
            <person name="Zabarovsky E."/>
            <person name="Zhu S."/>
            <person name="Zimmer A."/>
            <person name="Hide W."/>
            <person name="Bult C."/>
            <person name="Grimmond S.M."/>
            <person name="Teasdale R.D."/>
            <person name="Liu E.T."/>
            <person name="Brusic V."/>
            <person name="Quackenbush J."/>
            <person name="Wahlestedt C."/>
            <person name="Mattick J.S."/>
            <person name="Hume D.A."/>
            <person name="Kai C."/>
            <person name="Sasaki D."/>
            <person name="Tomaru Y."/>
            <person name="Fukuda S."/>
            <person name="Kanamori-Katayama M."/>
            <person name="Suzuki M."/>
            <person name="Aoki J."/>
            <person name="Arakawa T."/>
            <person name="Iida J."/>
            <person name="Imamura K."/>
            <person name="Itoh M."/>
            <person name="Kato T."/>
            <person name="Kawaji H."/>
            <person name="Kawagashira N."/>
            <person name="Kawashima T."/>
            <person name="Kojima M."/>
            <person name="Kondo S."/>
            <person name="Konno H."/>
            <person name="Nakano K."/>
            <person name="Ninomiya N."/>
            <person name="Nishio T."/>
            <person name="Okada M."/>
            <person name="Plessy C."/>
            <person name="Shibata K."/>
            <person name="Shiraki T."/>
            <person name="Suzuki S."/>
            <person name="Tagami M."/>
            <person name="Waki K."/>
            <person name="Watahiki A."/>
            <person name="Okamura-Oho Y."/>
            <person name="Suzuki H."/>
            <person name="Kawai J."/>
            <person name="Hayashizaki Y."/>
        </authorList>
    </citation>
    <scope>NUCLEOTIDE SEQUENCE [LARGE SCALE MRNA]</scope>
    <source>
        <strain>C57BL/6J</strain>
        <strain>NOD</strain>
        <tissue>Embryonic head</tissue>
        <tissue>Heart</tissue>
        <tissue>Testis</tissue>
        <tissue>Thymus</tissue>
    </source>
</reference>
<reference key="5">
    <citation type="journal article" date="2004" name="Genome Res.">
        <title>The status, quality, and expansion of the NIH full-length cDNA project: the Mammalian Gene Collection (MGC).</title>
        <authorList>
            <consortium name="The MGC Project Team"/>
        </authorList>
    </citation>
    <scope>NUCLEOTIDE SEQUENCE [LARGE SCALE MRNA]</scope>
    <source>
        <strain>C57BL/6J</strain>
        <tissue>Mammary gland</tissue>
    </source>
</reference>
<reference key="6">
    <citation type="submission" date="2007-07" db="UniProtKB">
        <authorList>
            <person name="Lubec G."/>
            <person name="Yang J.W."/>
            <person name="Zigmond M."/>
        </authorList>
    </citation>
    <scope>PROTEIN SEQUENCE OF 226-237</scope>
    <source>
        <tissue>Brain</tissue>
    </source>
</reference>
<reference key="7">
    <citation type="journal article" date="2006" name="Mol. Cell. Biol.">
        <title>Proteasome activator PA200 is required for normal spermatogenesis.</title>
        <authorList>
            <person name="Khor B."/>
            <person name="Bredemeyer A.L."/>
            <person name="Huang C.-Y."/>
            <person name="Turnbull I.R."/>
            <person name="Evans R."/>
            <person name="Maggi L.B. Jr."/>
            <person name="White J.M."/>
            <person name="Walker L.M."/>
            <person name="Carnes K."/>
            <person name="Hess R.A."/>
            <person name="Sleckman B.P."/>
        </authorList>
    </citation>
    <scope>FUNCTION</scope>
</reference>
<reference key="8">
    <citation type="journal article" date="2007" name="Life Sci.">
        <title>Tissue specific increase of the catalytic subunits of the 26S proteasome by indirect antioxidant dithiolethione in mice: enhanced activity for degradation of abnormal protein.</title>
        <authorList>
            <person name="Kwak M.K."/>
            <person name="Huang B."/>
            <person name="Chang H."/>
            <person name="Kim J.A."/>
            <person name="Kensler T.W."/>
        </authorList>
    </citation>
    <scope>INDUCTION BY DITHIOLETHIONE</scope>
</reference>
<reference key="9">
    <citation type="journal article" date="2006" name="Circ. Res.">
        <title>Mapping the murine cardiac 26S proteasome complexes.</title>
        <authorList>
            <person name="Gomes A.V."/>
            <person name="Zong C."/>
            <person name="Edmondson R.D."/>
            <person name="Li X."/>
            <person name="Stefani E."/>
            <person name="Zhang J."/>
            <person name="Jones R.C."/>
            <person name="Thyparambil S."/>
            <person name="Wang G.W."/>
            <person name="Qiao X."/>
            <person name="Bardag-Gorce F."/>
            <person name="Ping P."/>
        </authorList>
    </citation>
    <scope>IDENTIFICATION IN THE 20S PROTEASOME CORE COMPLEX</scope>
</reference>
<reference key="10">
    <citation type="journal article" date="2010" name="Cell">
        <title>A tissue-specific atlas of mouse protein phosphorylation and expression.</title>
        <authorList>
            <person name="Huttlin E.L."/>
            <person name="Jedrychowski M.P."/>
            <person name="Elias J.E."/>
            <person name="Goswami T."/>
            <person name="Rad R."/>
            <person name="Beausoleil S.A."/>
            <person name="Villen J."/>
            <person name="Haas W."/>
            <person name="Sowa M.E."/>
            <person name="Gygi S.P."/>
        </authorList>
    </citation>
    <scope>IDENTIFICATION BY MASS SPECTROMETRY [LARGE SCALE ANALYSIS]</scope>
    <source>
        <tissue>Brain</tissue>
        <tissue>Brown adipose tissue</tissue>
        <tissue>Heart</tissue>
        <tissue>Kidney</tissue>
        <tissue>Liver</tissue>
        <tissue>Lung</tissue>
        <tissue>Pancreas</tissue>
        <tissue>Spleen</tissue>
        <tissue>Testis</tissue>
    </source>
</reference>
<reference key="11">
    <citation type="journal article" date="2012" name="Cell">
        <title>Immuno- and constitutive proteasome crystal structures reveal differences in substrate and inhibitor specificity.</title>
        <authorList>
            <person name="Huber E.M."/>
            <person name="Basler M."/>
            <person name="Schwab R."/>
            <person name="Heinemeyer W."/>
            <person name="Kirk C.J."/>
            <person name="Groettrup M."/>
            <person name="Groll M."/>
        </authorList>
    </citation>
    <scope>X-RAY CRYSTALLOGRAPHY (2.90 ANGSTROMS) OF 20S IMMUNOPROTEASOME</scope>
    <scope>SUBUNIT</scope>
    <scope>FUNCTION</scope>
</reference>
<name>PSB7_MOUSE</name>
<organism>
    <name type="scientific">Mus musculus</name>
    <name type="common">Mouse</name>
    <dbReference type="NCBI Taxonomy" id="10090"/>
    <lineage>
        <taxon>Eukaryota</taxon>
        <taxon>Metazoa</taxon>
        <taxon>Chordata</taxon>
        <taxon>Craniata</taxon>
        <taxon>Vertebrata</taxon>
        <taxon>Euteleostomi</taxon>
        <taxon>Mammalia</taxon>
        <taxon>Eutheria</taxon>
        <taxon>Euarchontoglires</taxon>
        <taxon>Glires</taxon>
        <taxon>Rodentia</taxon>
        <taxon>Myomorpha</taxon>
        <taxon>Muroidea</taxon>
        <taxon>Muridae</taxon>
        <taxon>Murinae</taxon>
        <taxon>Mus</taxon>
        <taxon>Mus</taxon>
    </lineage>
</organism>